<sequence>MIDTKVNIAGVEFKNPVIAASGTFGFGREFLEYFPISKLGGLATKGLTLREREGNKGVRIHETIGGIMNSIGLQNPGIDAFIEEELPFLNSQDTVIIANVSGNTIDEYVISVEKLNQTDIDMIELNISCPNVKEGGISFGTKAEIASNVVTQVRKVCQKPLIVKLSPSAENIVEMAESCVEAGADALSLVNTFPALAIDISKKKAIFDNITAGLSGPCIKPIALRMVYEVSKAVDVPIIGIGGIMDYRDAIEYIMAGAWAVQVGTANFINPNACAEIIEGIEEYLQKEGISTLEEIRGII</sequence>
<accession>A9BJH4</accession>
<gene>
    <name type="primary">pyrD</name>
    <name type="ordered locus">Pmob_0657</name>
</gene>
<dbReference type="EC" id="1.3.1.14"/>
<dbReference type="EMBL" id="CP000879">
    <property type="protein sequence ID" value="ABX31388.1"/>
    <property type="molecule type" value="Genomic_DNA"/>
</dbReference>
<dbReference type="RefSeq" id="WP_012208491.1">
    <property type="nucleotide sequence ID" value="NC_010003.1"/>
</dbReference>
<dbReference type="SMR" id="A9BJH4"/>
<dbReference type="STRING" id="403833.Pmob_0657"/>
<dbReference type="KEGG" id="pmo:Pmob_0657"/>
<dbReference type="eggNOG" id="COG0167">
    <property type="taxonomic scope" value="Bacteria"/>
</dbReference>
<dbReference type="HOGENOM" id="CLU_042042_0_0_0"/>
<dbReference type="OrthoDB" id="9794954at2"/>
<dbReference type="UniPathway" id="UPA00070">
    <property type="reaction ID" value="UER00945"/>
</dbReference>
<dbReference type="Proteomes" id="UP000000789">
    <property type="component" value="Chromosome"/>
</dbReference>
<dbReference type="GO" id="GO:0005737">
    <property type="term" value="C:cytoplasm"/>
    <property type="evidence" value="ECO:0007669"/>
    <property type="project" value="UniProtKB-SubCell"/>
</dbReference>
<dbReference type="GO" id="GO:0004589">
    <property type="term" value="F:dihydroorotate dehydrogenase (NAD+) activity"/>
    <property type="evidence" value="ECO:0007669"/>
    <property type="project" value="UniProtKB-EC"/>
</dbReference>
<dbReference type="GO" id="GO:0006207">
    <property type="term" value="P:'de novo' pyrimidine nucleobase biosynthetic process"/>
    <property type="evidence" value="ECO:0007669"/>
    <property type="project" value="InterPro"/>
</dbReference>
<dbReference type="GO" id="GO:0044205">
    <property type="term" value="P:'de novo' UMP biosynthetic process"/>
    <property type="evidence" value="ECO:0007669"/>
    <property type="project" value="UniProtKB-UniRule"/>
</dbReference>
<dbReference type="CDD" id="cd04740">
    <property type="entry name" value="DHOD_1B_like"/>
    <property type="match status" value="1"/>
</dbReference>
<dbReference type="FunFam" id="3.20.20.70:FF:000027">
    <property type="entry name" value="Dihydropyrimidine dehydrogenase [NADP(+)]"/>
    <property type="match status" value="1"/>
</dbReference>
<dbReference type="Gene3D" id="3.20.20.70">
    <property type="entry name" value="Aldolase class I"/>
    <property type="match status" value="1"/>
</dbReference>
<dbReference type="HAMAP" id="MF_00224">
    <property type="entry name" value="DHO_dh_type1"/>
    <property type="match status" value="1"/>
</dbReference>
<dbReference type="InterPro" id="IPR013785">
    <property type="entry name" value="Aldolase_TIM"/>
</dbReference>
<dbReference type="InterPro" id="IPR050074">
    <property type="entry name" value="DHO_dehydrogenase"/>
</dbReference>
<dbReference type="InterPro" id="IPR033888">
    <property type="entry name" value="DHOD_1B"/>
</dbReference>
<dbReference type="InterPro" id="IPR024920">
    <property type="entry name" value="Dihydroorotate_DH_1"/>
</dbReference>
<dbReference type="InterPro" id="IPR012135">
    <property type="entry name" value="Dihydroorotate_DH_1_2"/>
</dbReference>
<dbReference type="InterPro" id="IPR005720">
    <property type="entry name" value="Dihydroorotate_DH_cat"/>
</dbReference>
<dbReference type="InterPro" id="IPR001295">
    <property type="entry name" value="Dihydroorotate_DH_CS"/>
</dbReference>
<dbReference type="InterPro" id="IPR049622">
    <property type="entry name" value="Dihydroorotate_DH_I"/>
</dbReference>
<dbReference type="NCBIfam" id="NF005574">
    <property type="entry name" value="PRK07259.1"/>
    <property type="match status" value="1"/>
</dbReference>
<dbReference type="NCBIfam" id="TIGR01037">
    <property type="entry name" value="pyrD_sub1_fam"/>
    <property type="match status" value="1"/>
</dbReference>
<dbReference type="PANTHER" id="PTHR48109:SF1">
    <property type="entry name" value="DIHYDROOROTATE DEHYDROGENASE (FUMARATE)"/>
    <property type="match status" value="1"/>
</dbReference>
<dbReference type="PANTHER" id="PTHR48109">
    <property type="entry name" value="DIHYDROOROTATE DEHYDROGENASE (QUINONE), MITOCHONDRIAL-RELATED"/>
    <property type="match status" value="1"/>
</dbReference>
<dbReference type="Pfam" id="PF01180">
    <property type="entry name" value="DHO_dh"/>
    <property type="match status" value="1"/>
</dbReference>
<dbReference type="PIRSF" id="PIRSF000164">
    <property type="entry name" value="DHO_oxidase"/>
    <property type="match status" value="1"/>
</dbReference>
<dbReference type="SUPFAM" id="SSF51395">
    <property type="entry name" value="FMN-linked oxidoreductases"/>
    <property type="match status" value="1"/>
</dbReference>
<dbReference type="PROSITE" id="PS00912">
    <property type="entry name" value="DHODEHASE_2"/>
    <property type="match status" value="1"/>
</dbReference>
<comment type="function">
    <text evidence="1">Catalyzes the conversion of dihydroorotate to orotate with NAD(+) as electron acceptor.</text>
</comment>
<comment type="catalytic activity">
    <reaction>
        <text>(S)-dihydroorotate + NAD(+) = orotate + NADH + H(+)</text>
        <dbReference type="Rhea" id="RHEA:13513"/>
        <dbReference type="ChEBI" id="CHEBI:15378"/>
        <dbReference type="ChEBI" id="CHEBI:30839"/>
        <dbReference type="ChEBI" id="CHEBI:30864"/>
        <dbReference type="ChEBI" id="CHEBI:57540"/>
        <dbReference type="ChEBI" id="CHEBI:57945"/>
        <dbReference type="EC" id="1.3.1.14"/>
    </reaction>
</comment>
<comment type="cofactor">
    <cofactor evidence="1">
        <name>FMN</name>
        <dbReference type="ChEBI" id="CHEBI:58210"/>
    </cofactor>
    <text evidence="1">Binds 1 FMN per subunit.</text>
</comment>
<comment type="pathway">
    <text>Pyrimidine metabolism; UMP biosynthesis via de novo pathway; orotate from (S)-dihydroorotate (NAD(+) route): step 1/1.</text>
</comment>
<comment type="subunit">
    <text evidence="1">Heterotetramer of 2 PyrK and 2 PyrD type B subunits.</text>
</comment>
<comment type="subcellular location">
    <subcellularLocation>
        <location evidence="1">Cytoplasm</location>
    </subcellularLocation>
</comment>
<comment type="similarity">
    <text evidence="2">Belongs to the dihydroorotate dehydrogenase family. Type 1 subfamily.</text>
</comment>
<protein>
    <recommendedName>
        <fullName>Dihydroorotate dehydrogenase B (NAD(+)), catalytic subunit</fullName>
        <shortName>DHOD B</shortName>
        <shortName>DHODase B</shortName>
        <shortName>DHOdehase B</shortName>
        <ecNumber>1.3.1.14</ecNumber>
    </recommendedName>
    <alternativeName>
        <fullName>Dihydroorotate oxidase B</fullName>
    </alternativeName>
    <alternativeName>
        <fullName>Orotate reductase (NADH)</fullName>
    </alternativeName>
</protein>
<keyword id="KW-0963">Cytoplasm</keyword>
<keyword id="KW-0285">Flavoprotein</keyword>
<keyword id="KW-0288">FMN</keyword>
<keyword id="KW-0520">NAD</keyword>
<keyword id="KW-0560">Oxidoreductase</keyword>
<keyword id="KW-0665">Pyrimidine biosynthesis</keyword>
<name>PYRDB_PETMO</name>
<proteinExistence type="inferred from homology"/>
<feature type="chain" id="PRO_1000204310" description="Dihydroorotate dehydrogenase B (NAD(+)), catalytic subunit">
    <location>
        <begin position="1"/>
        <end position="300"/>
    </location>
</feature>
<feature type="active site" description="Nucleophile">
    <location>
        <position position="129"/>
    </location>
</feature>
<feature type="binding site" evidence="1">
    <location>
        <position position="21"/>
    </location>
    <ligand>
        <name>FMN</name>
        <dbReference type="ChEBI" id="CHEBI:58210"/>
    </ligand>
</feature>
<feature type="binding site" evidence="1">
    <location>
        <begin position="45"/>
        <end position="46"/>
    </location>
    <ligand>
        <name>FMN</name>
        <dbReference type="ChEBI" id="CHEBI:58210"/>
    </ligand>
</feature>
<feature type="binding site" evidence="1">
    <location>
        <position position="45"/>
    </location>
    <ligand>
        <name>substrate</name>
    </ligand>
</feature>
<feature type="binding site" evidence="1">
    <location>
        <begin position="69"/>
        <end position="73"/>
    </location>
    <ligand>
        <name>substrate</name>
    </ligand>
</feature>
<feature type="binding site" evidence="1">
    <location>
        <position position="99"/>
    </location>
    <ligand>
        <name>FMN</name>
        <dbReference type="ChEBI" id="CHEBI:58210"/>
    </ligand>
</feature>
<feature type="binding site" evidence="1">
    <location>
        <position position="126"/>
    </location>
    <ligand>
        <name>FMN</name>
        <dbReference type="ChEBI" id="CHEBI:58210"/>
    </ligand>
</feature>
<feature type="binding site" evidence="1">
    <location>
        <position position="126"/>
    </location>
    <ligand>
        <name>substrate</name>
    </ligand>
</feature>
<feature type="binding site" evidence="1">
    <location>
        <position position="164"/>
    </location>
    <ligand>
        <name>FMN</name>
        <dbReference type="ChEBI" id="CHEBI:58210"/>
    </ligand>
</feature>
<feature type="binding site" evidence="1">
    <location>
        <position position="190"/>
    </location>
    <ligand>
        <name>FMN</name>
        <dbReference type="ChEBI" id="CHEBI:58210"/>
    </ligand>
</feature>
<feature type="binding site" evidence="1">
    <location>
        <begin position="191"/>
        <end position="192"/>
    </location>
    <ligand>
        <name>substrate</name>
    </ligand>
</feature>
<feature type="binding site" evidence="1">
    <location>
        <position position="216"/>
    </location>
    <ligand>
        <name>FMN</name>
        <dbReference type="ChEBI" id="CHEBI:58210"/>
    </ligand>
</feature>
<feature type="binding site" evidence="1">
    <location>
        <begin position="242"/>
        <end position="243"/>
    </location>
    <ligand>
        <name>FMN</name>
        <dbReference type="ChEBI" id="CHEBI:58210"/>
    </ligand>
</feature>
<feature type="binding site" evidence="1">
    <location>
        <begin position="264"/>
        <end position="265"/>
    </location>
    <ligand>
        <name>FMN</name>
        <dbReference type="ChEBI" id="CHEBI:58210"/>
    </ligand>
</feature>
<evidence type="ECO:0000250" key="1"/>
<evidence type="ECO:0000305" key="2"/>
<reference key="1">
    <citation type="submission" date="2007-11" db="EMBL/GenBank/DDBJ databases">
        <title>Complete sequence of Petroga mobilis SJ95.</title>
        <authorList>
            <consortium name="US DOE Joint Genome Institute"/>
            <person name="Copeland A."/>
            <person name="Lucas S."/>
            <person name="Lapidus A."/>
            <person name="Barry K."/>
            <person name="Glavina del Rio T."/>
            <person name="Dalin E."/>
            <person name="Tice H."/>
            <person name="Pitluck S."/>
            <person name="Meincke L."/>
            <person name="Brettin T."/>
            <person name="Bruce D."/>
            <person name="Detter J.C."/>
            <person name="Han C."/>
            <person name="Kuske C.R."/>
            <person name="Schmutz J."/>
            <person name="Larimer F."/>
            <person name="Land M."/>
            <person name="Hauser L."/>
            <person name="Kyrpides N."/>
            <person name="Mikhailova N."/>
            <person name="Noll K."/>
            <person name="Richardson P."/>
        </authorList>
    </citation>
    <scope>NUCLEOTIDE SEQUENCE [LARGE SCALE GENOMIC DNA]</scope>
    <source>
        <strain>DSM 10674 / SJ95</strain>
    </source>
</reference>
<organism>
    <name type="scientific">Petrotoga mobilis (strain DSM 10674 / SJ95)</name>
    <dbReference type="NCBI Taxonomy" id="403833"/>
    <lineage>
        <taxon>Bacteria</taxon>
        <taxon>Thermotogati</taxon>
        <taxon>Thermotogota</taxon>
        <taxon>Thermotogae</taxon>
        <taxon>Petrotogales</taxon>
        <taxon>Petrotogaceae</taxon>
        <taxon>Petrotoga</taxon>
    </lineage>
</organism>